<gene>
    <name evidence="2" type="primary">petD</name>
</gene>
<comment type="function">
    <text evidence="2">Component of the cytochrome b6-f complex, which mediates electron transfer between photosystem II (PSII) and photosystem I (PSI), cyclic electron flow around PSI, and state transitions.</text>
</comment>
<comment type="subunit">
    <text evidence="1">The 4 large subunits of the cytochrome b6-f complex are cytochrome b6, subunit IV (17 kDa polypeptide, petD), cytochrome f and the Rieske protein, while the 4 small subunits are petG, petL, petM and petN. The complex functions as a dimer (By similarity).</text>
</comment>
<comment type="subcellular location">
    <subcellularLocation>
        <location evidence="2">Plastid</location>
        <location evidence="2">Chloroplast thylakoid membrane</location>
        <topology evidence="2">Multi-pass membrane protein</topology>
    </subcellularLocation>
</comment>
<comment type="similarity">
    <text evidence="2">Belongs to the cytochrome b family. PetD subfamily.</text>
</comment>
<dbReference type="EMBL" id="EF067920">
    <property type="protein sequence ID" value="ABK20615.1"/>
    <property type="molecule type" value="Genomic_DNA"/>
</dbReference>
<dbReference type="RefSeq" id="YP_874392.1">
    <property type="nucleotide sequence ID" value="NC_008588.1"/>
</dbReference>
<dbReference type="SMR" id="A0T0B7"/>
<dbReference type="STRING" id="556484.A0T0B7"/>
<dbReference type="GeneID" id="4524677"/>
<dbReference type="InParanoid" id="A0T0B7"/>
<dbReference type="Proteomes" id="UP000000759">
    <property type="component" value="Chloroplast"/>
</dbReference>
<dbReference type="GO" id="GO:0009535">
    <property type="term" value="C:chloroplast thylakoid membrane"/>
    <property type="evidence" value="ECO:0007669"/>
    <property type="project" value="UniProtKB-SubCell"/>
</dbReference>
<dbReference type="GO" id="GO:0045158">
    <property type="term" value="F:electron transporter, transferring electrons within cytochrome b6/f complex of photosystem II activity"/>
    <property type="evidence" value="ECO:0007669"/>
    <property type="project" value="UniProtKB-UniRule"/>
</dbReference>
<dbReference type="GO" id="GO:0045156">
    <property type="term" value="F:electron transporter, transferring electrons within the cyclic electron transport pathway of photosynthesis activity"/>
    <property type="evidence" value="ECO:0007669"/>
    <property type="project" value="InterPro"/>
</dbReference>
<dbReference type="GO" id="GO:0016491">
    <property type="term" value="F:oxidoreductase activity"/>
    <property type="evidence" value="ECO:0007669"/>
    <property type="project" value="InterPro"/>
</dbReference>
<dbReference type="GO" id="GO:0009767">
    <property type="term" value="P:photosynthetic electron transport chain"/>
    <property type="evidence" value="ECO:0007669"/>
    <property type="project" value="InterPro"/>
</dbReference>
<dbReference type="CDD" id="cd00290">
    <property type="entry name" value="cytochrome_b_C"/>
    <property type="match status" value="1"/>
</dbReference>
<dbReference type="FunFam" id="1.10.287.980:FF:000001">
    <property type="entry name" value="Cytochrome b6-f complex subunit 4"/>
    <property type="match status" value="1"/>
</dbReference>
<dbReference type="FunFam" id="1.20.5.510:FF:000002">
    <property type="entry name" value="Cytochrome b6-f complex subunit 4"/>
    <property type="match status" value="1"/>
</dbReference>
<dbReference type="Gene3D" id="1.10.287.980">
    <property type="entry name" value="plastocyanin oxidoreductase"/>
    <property type="match status" value="1"/>
</dbReference>
<dbReference type="Gene3D" id="1.20.5.510">
    <property type="entry name" value="Single helix bin"/>
    <property type="match status" value="1"/>
</dbReference>
<dbReference type="HAMAP" id="MF_01344">
    <property type="entry name" value="Cytb6_f_subIV"/>
    <property type="match status" value="1"/>
</dbReference>
<dbReference type="InterPro" id="IPR005798">
    <property type="entry name" value="Cyt_b/b6_C"/>
</dbReference>
<dbReference type="InterPro" id="IPR036150">
    <property type="entry name" value="Cyt_b/b6_C_sf"/>
</dbReference>
<dbReference type="InterPro" id="IPR005870">
    <property type="entry name" value="Cyt_b6/f_cplx_suIV"/>
</dbReference>
<dbReference type="InterPro" id="IPR048260">
    <property type="entry name" value="Cytochrome_b_C_euk/bac"/>
</dbReference>
<dbReference type="NCBIfam" id="TIGR01156">
    <property type="entry name" value="cytb6_f_IV"/>
    <property type="match status" value="1"/>
</dbReference>
<dbReference type="PANTHER" id="PTHR19271">
    <property type="entry name" value="CYTOCHROME B"/>
    <property type="match status" value="1"/>
</dbReference>
<dbReference type="PANTHER" id="PTHR19271:SF16">
    <property type="entry name" value="CYTOCHROME B"/>
    <property type="match status" value="1"/>
</dbReference>
<dbReference type="Pfam" id="PF00032">
    <property type="entry name" value="Cytochrom_B_C"/>
    <property type="match status" value="1"/>
</dbReference>
<dbReference type="PIRSF" id="PIRSF000033">
    <property type="entry name" value="B6f_17K"/>
    <property type="match status" value="1"/>
</dbReference>
<dbReference type="SUPFAM" id="SSF81648">
    <property type="entry name" value="a domain/subunit of cytochrome bc1 complex (Ubiquinol-cytochrome c reductase)"/>
    <property type="match status" value="1"/>
</dbReference>
<dbReference type="PROSITE" id="PS51003">
    <property type="entry name" value="CYTB_CTER"/>
    <property type="match status" value="1"/>
</dbReference>
<geneLocation type="chloroplast"/>
<accession>A0T0B7</accession>
<evidence type="ECO:0000250" key="1"/>
<evidence type="ECO:0000255" key="2">
    <source>
        <dbReference type="HAMAP-Rule" id="MF_01344"/>
    </source>
</evidence>
<sequence length="160" mass="17723">MSVIKKPDLTDPKLRAKLAKGMGHNYYGEPAWPNDLLYVFPLTMLGTLTCIVGLSVLAPTQLGEPADPFNTPLEILPEWYFFPTFNLLRVLPNKLLGVLAMAAVPLGLITVPFIENVNKFQNPFRRPLASLTFIFGFFTAVWLGIGACVPIDKAISLGFW</sequence>
<protein>
    <recommendedName>
        <fullName evidence="2">Cytochrome b6-f complex subunit 4</fullName>
    </recommendedName>
    <alternativeName>
        <fullName evidence="2">17 kDa polypeptide</fullName>
    </alternativeName>
</protein>
<organism>
    <name type="scientific">Phaeodactylum tricornutum (strain CCAP 1055/1)</name>
    <dbReference type="NCBI Taxonomy" id="556484"/>
    <lineage>
        <taxon>Eukaryota</taxon>
        <taxon>Sar</taxon>
        <taxon>Stramenopiles</taxon>
        <taxon>Ochrophyta</taxon>
        <taxon>Bacillariophyta</taxon>
        <taxon>Bacillariophyceae</taxon>
        <taxon>Bacillariophycidae</taxon>
        <taxon>Naviculales</taxon>
        <taxon>Phaeodactylaceae</taxon>
        <taxon>Phaeodactylum</taxon>
    </lineage>
</organism>
<reference key="1">
    <citation type="journal article" date="2007" name="Mol. Genet. Genomics">
        <title>Chloroplast genomes of the diatoms Phaeodactylum tricornutum and Thalassiosira pseudonana: comparison with other plastid genomes of the red lineage.</title>
        <authorList>
            <person name="Oudot-Le Secq M.-P."/>
            <person name="Grimwood J."/>
            <person name="Shapiro H."/>
            <person name="Armbrust E.V."/>
            <person name="Bowler C."/>
            <person name="Green B.R."/>
        </authorList>
    </citation>
    <scope>NUCLEOTIDE SEQUENCE [LARGE SCALE GENOMIC DNA]</scope>
    <source>
        <strain>CCAP 1055/1</strain>
    </source>
</reference>
<name>PETD_PHATC</name>
<feature type="chain" id="PRO_0000276546" description="Cytochrome b6-f complex subunit 4">
    <location>
        <begin position="1"/>
        <end position="160"/>
    </location>
</feature>
<feature type="transmembrane region" description="Helical" evidence="2">
    <location>
        <begin position="36"/>
        <end position="56"/>
    </location>
</feature>
<feature type="transmembrane region" description="Helical" evidence="2">
    <location>
        <begin position="95"/>
        <end position="115"/>
    </location>
</feature>
<feature type="transmembrane region" description="Helical" evidence="2">
    <location>
        <begin position="131"/>
        <end position="151"/>
    </location>
</feature>
<keyword id="KW-0150">Chloroplast</keyword>
<keyword id="KW-0249">Electron transport</keyword>
<keyword id="KW-0472">Membrane</keyword>
<keyword id="KW-0602">Photosynthesis</keyword>
<keyword id="KW-0934">Plastid</keyword>
<keyword id="KW-1185">Reference proteome</keyword>
<keyword id="KW-0793">Thylakoid</keyword>
<keyword id="KW-0812">Transmembrane</keyword>
<keyword id="KW-1133">Transmembrane helix</keyword>
<keyword id="KW-0813">Transport</keyword>
<proteinExistence type="inferred from homology"/>